<evidence type="ECO:0000255" key="1">
    <source>
        <dbReference type="PROSITE-ProRule" id="PRU01182"/>
    </source>
</evidence>
<evidence type="ECO:0000256" key="2">
    <source>
        <dbReference type="SAM" id="MobiDB-lite"/>
    </source>
</evidence>
<evidence type="ECO:0000305" key="3"/>
<dbReference type="EMBL" id="CP001182">
    <property type="protein sequence ID" value="ACJ41990.1"/>
    <property type="molecule type" value="Genomic_DNA"/>
</dbReference>
<dbReference type="SMR" id="B7I981"/>
<dbReference type="KEGG" id="abn:AB57_3420"/>
<dbReference type="HOGENOM" id="CLU_073529_0_2_6"/>
<dbReference type="Proteomes" id="UP000007094">
    <property type="component" value="Chromosome"/>
</dbReference>
<dbReference type="GO" id="GO:0046872">
    <property type="term" value="F:metal ion binding"/>
    <property type="evidence" value="ECO:0007669"/>
    <property type="project" value="UniProtKB-KW"/>
</dbReference>
<dbReference type="GO" id="GO:0008237">
    <property type="term" value="F:metallopeptidase activity"/>
    <property type="evidence" value="ECO:0007669"/>
    <property type="project" value="UniProtKB-KW"/>
</dbReference>
<dbReference type="GO" id="GO:0006508">
    <property type="term" value="P:proteolysis"/>
    <property type="evidence" value="ECO:0007669"/>
    <property type="project" value="UniProtKB-KW"/>
</dbReference>
<dbReference type="CDD" id="cd08071">
    <property type="entry name" value="MPN_DUF2466"/>
    <property type="match status" value="1"/>
</dbReference>
<dbReference type="Gene3D" id="1.10.150.20">
    <property type="entry name" value="5' to 3' exonuclease, C-terminal subdomain"/>
    <property type="match status" value="1"/>
</dbReference>
<dbReference type="Gene3D" id="3.40.140.10">
    <property type="entry name" value="Cytidine Deaminase, domain 2"/>
    <property type="match status" value="1"/>
</dbReference>
<dbReference type="InterPro" id="IPR037518">
    <property type="entry name" value="MPN"/>
</dbReference>
<dbReference type="InterPro" id="IPR025657">
    <property type="entry name" value="RadC_JAB"/>
</dbReference>
<dbReference type="InterPro" id="IPR010994">
    <property type="entry name" value="RuvA_2-like"/>
</dbReference>
<dbReference type="InterPro" id="IPR001405">
    <property type="entry name" value="UPF0758"/>
</dbReference>
<dbReference type="InterPro" id="IPR046778">
    <property type="entry name" value="UPF0758_N"/>
</dbReference>
<dbReference type="NCBIfam" id="NF000642">
    <property type="entry name" value="PRK00024.1"/>
    <property type="match status" value="1"/>
</dbReference>
<dbReference type="NCBIfam" id="TIGR00608">
    <property type="entry name" value="radc"/>
    <property type="match status" value="1"/>
</dbReference>
<dbReference type="PANTHER" id="PTHR30471">
    <property type="entry name" value="DNA REPAIR PROTEIN RADC"/>
    <property type="match status" value="1"/>
</dbReference>
<dbReference type="PANTHER" id="PTHR30471:SF3">
    <property type="entry name" value="UPF0758 PROTEIN YEES-RELATED"/>
    <property type="match status" value="1"/>
</dbReference>
<dbReference type="Pfam" id="PF04002">
    <property type="entry name" value="RadC"/>
    <property type="match status" value="1"/>
</dbReference>
<dbReference type="Pfam" id="PF20582">
    <property type="entry name" value="UPF0758_N"/>
    <property type="match status" value="1"/>
</dbReference>
<dbReference type="SUPFAM" id="SSF102712">
    <property type="entry name" value="JAB1/MPN domain"/>
    <property type="match status" value="1"/>
</dbReference>
<dbReference type="SUPFAM" id="SSF47781">
    <property type="entry name" value="RuvA domain 2-like"/>
    <property type="match status" value="1"/>
</dbReference>
<dbReference type="PROSITE" id="PS50249">
    <property type="entry name" value="MPN"/>
    <property type="match status" value="1"/>
</dbReference>
<reference key="1">
    <citation type="journal article" date="2008" name="J. Bacteriol.">
        <title>Comparative genome sequence analysis of multidrug-resistant Acinetobacter baumannii.</title>
        <authorList>
            <person name="Adams M.D."/>
            <person name="Goglin K."/>
            <person name="Molyneaux N."/>
            <person name="Hujer K.M."/>
            <person name="Lavender H."/>
            <person name="Jamison J.J."/>
            <person name="MacDonald I.J."/>
            <person name="Martin K.M."/>
            <person name="Russo T."/>
            <person name="Campagnari A.A."/>
            <person name="Hujer A.M."/>
            <person name="Bonomo R.A."/>
            <person name="Gill S.R."/>
        </authorList>
    </citation>
    <scope>NUCLEOTIDE SEQUENCE [LARGE SCALE GENOMIC DNA]</scope>
    <source>
        <strain>AB0057</strain>
    </source>
</reference>
<gene>
    <name type="ordered locus">AB57_3420</name>
</gene>
<protein>
    <recommendedName>
        <fullName>UPF0758 protein AB57_3420</fullName>
    </recommendedName>
</protein>
<sequence length="235" mass="26761">MNTSIKNWPEQERPRERLLQQGPQSLSDSELLAIFLRSGSRQHSAVELARLLIQQFGSLNAVFDASYNELAQFNGIGATKYSQLLAVKELGRRYLDYHFSQTELSLHSSHLVLDYLRYELKGEKQEVFAVLCLDAELRKLHFKKLFFGSVQHCAVSVNQTLRYALQQHACQLVIAHNHPFGSPQPSPEDIKLTQQLEQACQLVEIRLLDHFIISPEGSFSFAEQQLLNPTSIAVQ</sequence>
<accession>B7I981</accession>
<proteinExistence type="inferred from homology"/>
<organism>
    <name type="scientific">Acinetobacter baumannii (strain AB0057)</name>
    <dbReference type="NCBI Taxonomy" id="480119"/>
    <lineage>
        <taxon>Bacteria</taxon>
        <taxon>Pseudomonadati</taxon>
        <taxon>Pseudomonadota</taxon>
        <taxon>Gammaproteobacteria</taxon>
        <taxon>Moraxellales</taxon>
        <taxon>Moraxellaceae</taxon>
        <taxon>Acinetobacter</taxon>
        <taxon>Acinetobacter calcoaceticus/baumannii complex</taxon>
    </lineage>
</organism>
<comment type="similarity">
    <text evidence="3">Belongs to the UPF0758 family.</text>
</comment>
<keyword id="KW-0378">Hydrolase</keyword>
<keyword id="KW-0479">Metal-binding</keyword>
<keyword id="KW-0482">Metalloprotease</keyword>
<keyword id="KW-0645">Protease</keyword>
<keyword id="KW-0862">Zinc</keyword>
<name>Y3420_ACIB5</name>
<feature type="chain" id="PRO_1000195280" description="UPF0758 protein AB57_3420">
    <location>
        <begin position="1"/>
        <end position="235"/>
    </location>
</feature>
<feature type="domain" description="MPN" evidence="1">
    <location>
        <begin position="105"/>
        <end position="227"/>
    </location>
</feature>
<feature type="region of interest" description="Disordered" evidence="2">
    <location>
        <begin position="1"/>
        <end position="20"/>
    </location>
</feature>
<feature type="short sequence motif" description="JAMM motif" evidence="1">
    <location>
        <begin position="176"/>
        <end position="189"/>
    </location>
</feature>
<feature type="compositionally biased region" description="Basic and acidic residues" evidence="2">
    <location>
        <begin position="9"/>
        <end position="18"/>
    </location>
</feature>
<feature type="binding site" evidence="1">
    <location>
        <position position="176"/>
    </location>
    <ligand>
        <name>Zn(2+)</name>
        <dbReference type="ChEBI" id="CHEBI:29105"/>
        <note>catalytic</note>
    </ligand>
</feature>
<feature type="binding site" evidence="1">
    <location>
        <position position="178"/>
    </location>
    <ligand>
        <name>Zn(2+)</name>
        <dbReference type="ChEBI" id="CHEBI:29105"/>
        <note>catalytic</note>
    </ligand>
</feature>
<feature type="binding site" evidence="1">
    <location>
        <position position="189"/>
    </location>
    <ligand>
        <name>Zn(2+)</name>
        <dbReference type="ChEBI" id="CHEBI:29105"/>
        <note>catalytic</note>
    </ligand>
</feature>